<proteinExistence type="inferred from homology"/>
<protein>
    <recommendedName>
        <fullName evidence="1">Enolase 2</fullName>
        <ecNumber evidence="1">4.2.1.11</ecNumber>
    </recommendedName>
    <alternativeName>
        <fullName evidence="1">2-phospho-D-glycerate hydro-lyase 2</fullName>
    </alternativeName>
    <alternativeName>
        <fullName evidence="1">2-phosphoglycerate dehydratase 2</fullName>
    </alternativeName>
</protein>
<keyword id="KW-0963">Cytoplasm</keyword>
<keyword id="KW-0324">Glycolysis</keyword>
<keyword id="KW-0456">Lyase</keyword>
<keyword id="KW-0460">Magnesium</keyword>
<keyword id="KW-0479">Metal-binding</keyword>
<keyword id="KW-1185">Reference proteome</keyword>
<keyword id="KW-0964">Secreted</keyword>
<comment type="function">
    <text evidence="1">Catalyzes the reversible conversion of 2-phosphoglycerate (2-PG) into phosphoenolpyruvate (PEP). It is essential for the degradation of carbohydrates via glycolysis.</text>
</comment>
<comment type="catalytic activity">
    <reaction evidence="1">
        <text>(2R)-2-phosphoglycerate = phosphoenolpyruvate + H2O</text>
        <dbReference type="Rhea" id="RHEA:10164"/>
        <dbReference type="ChEBI" id="CHEBI:15377"/>
        <dbReference type="ChEBI" id="CHEBI:58289"/>
        <dbReference type="ChEBI" id="CHEBI:58702"/>
        <dbReference type="EC" id="4.2.1.11"/>
    </reaction>
</comment>
<comment type="cofactor">
    <cofactor evidence="1">
        <name>Mg(2+)</name>
        <dbReference type="ChEBI" id="CHEBI:18420"/>
    </cofactor>
    <text evidence="1">Binds a second Mg(2+) ion via substrate during catalysis.</text>
</comment>
<comment type="pathway">
    <text evidence="1">Carbohydrate degradation; glycolysis; pyruvate from D-glyceraldehyde 3-phosphate: step 4/5.</text>
</comment>
<comment type="subcellular location">
    <subcellularLocation>
        <location evidence="1">Cytoplasm</location>
    </subcellularLocation>
    <subcellularLocation>
        <location evidence="1">Secreted</location>
    </subcellularLocation>
    <subcellularLocation>
        <location evidence="1">Cell surface</location>
    </subcellularLocation>
    <text evidence="1">Fractions of enolase are present in both the cytoplasm and on the cell surface.</text>
</comment>
<comment type="similarity">
    <text evidence="1">Belongs to the enolase family.</text>
</comment>
<sequence>MDTRIKRIIAREILDSRGNPTVEVDITLNNGIRGRAACPSGASTGIHEAVERRDGEKRFGGKGVQGAVQAVMDIISPKLLGRDALEQKSIDSVMIELDGTPNKAKLGANAILTVSMAVARAAANSEDVLLSEYLGPKSTLMPVPCMNIMNGGAHANWQGSDFQEYMIAPVGAPDYPEAVRWGCEVYHSLKSVLKKKGLSTGVGDEGGFAPIVPSNLEPASLIVHAIEEAGYIPGKDIALVLDPASSGFYKDGKYTLKTEKKVLTSEEMTDYYEDMIRTYPIISIEDGLAEDDWEGFAFMTKRLGNTIQIVGDDIFVTNPERIHRGLKEKTANAVLIKLNQIGTVTETIDAIRLAQKAGWGTMVSHRSGETCDSFIADLTVALGCGQLKTGAPCRGERVEKYNQLLRINEFLGDKARYAGRQAFNSA</sequence>
<evidence type="ECO:0000255" key="1">
    <source>
        <dbReference type="HAMAP-Rule" id="MF_00318"/>
    </source>
</evidence>
<accession>Q2FLB5</accession>
<reference key="1">
    <citation type="journal article" date="2016" name="Stand. Genomic Sci.">
        <title>Complete genome sequence of Methanospirillum hungatei type strain JF1.</title>
        <authorList>
            <person name="Gunsalus R.P."/>
            <person name="Cook L.E."/>
            <person name="Crable B."/>
            <person name="Rohlin L."/>
            <person name="McDonald E."/>
            <person name="Mouttaki H."/>
            <person name="Sieber J.R."/>
            <person name="Poweleit N."/>
            <person name="Zhou H."/>
            <person name="Lapidus A.L."/>
            <person name="Daligault H.E."/>
            <person name="Land M."/>
            <person name="Gilna P."/>
            <person name="Ivanova N."/>
            <person name="Kyrpides N."/>
            <person name="Culley D.E."/>
            <person name="McInerney M.J."/>
        </authorList>
    </citation>
    <scope>NUCLEOTIDE SEQUENCE [LARGE SCALE GENOMIC DNA]</scope>
    <source>
        <strain>ATCC 27890 / DSM 864 / NBRC 100397 / JF-1</strain>
    </source>
</reference>
<dbReference type="EC" id="4.2.1.11" evidence="1"/>
<dbReference type="EMBL" id="CP000254">
    <property type="protein sequence ID" value="ABD40850.1"/>
    <property type="molecule type" value="Genomic_DNA"/>
</dbReference>
<dbReference type="RefSeq" id="WP_011448128.1">
    <property type="nucleotide sequence ID" value="NC_007796.1"/>
</dbReference>
<dbReference type="SMR" id="Q2FLB5"/>
<dbReference type="FunCoup" id="Q2FLB5">
    <property type="interactions" value="187"/>
</dbReference>
<dbReference type="STRING" id="323259.Mhun_1101"/>
<dbReference type="EnsemblBacteria" id="ABD40850">
    <property type="protein sequence ID" value="ABD40850"/>
    <property type="gene ID" value="Mhun_1101"/>
</dbReference>
<dbReference type="GeneID" id="3922134"/>
<dbReference type="KEGG" id="mhu:Mhun_1101"/>
<dbReference type="eggNOG" id="arCOG01169">
    <property type="taxonomic scope" value="Archaea"/>
</dbReference>
<dbReference type="HOGENOM" id="CLU_031223_2_1_2"/>
<dbReference type="InParanoid" id="Q2FLB5"/>
<dbReference type="OrthoDB" id="8680at2157"/>
<dbReference type="UniPathway" id="UPA00109">
    <property type="reaction ID" value="UER00187"/>
</dbReference>
<dbReference type="Proteomes" id="UP000001941">
    <property type="component" value="Chromosome"/>
</dbReference>
<dbReference type="GO" id="GO:0009986">
    <property type="term" value="C:cell surface"/>
    <property type="evidence" value="ECO:0007669"/>
    <property type="project" value="UniProtKB-SubCell"/>
</dbReference>
<dbReference type="GO" id="GO:0005576">
    <property type="term" value="C:extracellular region"/>
    <property type="evidence" value="ECO:0007669"/>
    <property type="project" value="UniProtKB-SubCell"/>
</dbReference>
<dbReference type="GO" id="GO:0000015">
    <property type="term" value="C:phosphopyruvate hydratase complex"/>
    <property type="evidence" value="ECO:0007669"/>
    <property type="project" value="InterPro"/>
</dbReference>
<dbReference type="GO" id="GO:0000287">
    <property type="term" value="F:magnesium ion binding"/>
    <property type="evidence" value="ECO:0007669"/>
    <property type="project" value="UniProtKB-UniRule"/>
</dbReference>
<dbReference type="GO" id="GO:0004634">
    <property type="term" value="F:phosphopyruvate hydratase activity"/>
    <property type="evidence" value="ECO:0007669"/>
    <property type="project" value="UniProtKB-UniRule"/>
</dbReference>
<dbReference type="GO" id="GO:0006096">
    <property type="term" value="P:glycolytic process"/>
    <property type="evidence" value="ECO:0007669"/>
    <property type="project" value="UniProtKB-UniRule"/>
</dbReference>
<dbReference type="CDD" id="cd03313">
    <property type="entry name" value="enolase"/>
    <property type="match status" value="1"/>
</dbReference>
<dbReference type="FunFam" id="3.30.390.10:FF:000001">
    <property type="entry name" value="Enolase"/>
    <property type="match status" value="1"/>
</dbReference>
<dbReference type="Gene3D" id="3.20.20.120">
    <property type="entry name" value="Enolase-like C-terminal domain"/>
    <property type="match status" value="1"/>
</dbReference>
<dbReference type="Gene3D" id="3.30.390.10">
    <property type="entry name" value="Enolase-like, N-terminal domain"/>
    <property type="match status" value="1"/>
</dbReference>
<dbReference type="HAMAP" id="MF_00318">
    <property type="entry name" value="Enolase"/>
    <property type="match status" value="1"/>
</dbReference>
<dbReference type="InterPro" id="IPR000941">
    <property type="entry name" value="Enolase"/>
</dbReference>
<dbReference type="InterPro" id="IPR036849">
    <property type="entry name" value="Enolase-like_C_sf"/>
</dbReference>
<dbReference type="InterPro" id="IPR029017">
    <property type="entry name" value="Enolase-like_N"/>
</dbReference>
<dbReference type="InterPro" id="IPR020810">
    <property type="entry name" value="Enolase_C"/>
</dbReference>
<dbReference type="InterPro" id="IPR020809">
    <property type="entry name" value="Enolase_CS"/>
</dbReference>
<dbReference type="InterPro" id="IPR020811">
    <property type="entry name" value="Enolase_N"/>
</dbReference>
<dbReference type="NCBIfam" id="TIGR01060">
    <property type="entry name" value="eno"/>
    <property type="match status" value="1"/>
</dbReference>
<dbReference type="PANTHER" id="PTHR11902">
    <property type="entry name" value="ENOLASE"/>
    <property type="match status" value="1"/>
</dbReference>
<dbReference type="PANTHER" id="PTHR11902:SF1">
    <property type="entry name" value="ENOLASE"/>
    <property type="match status" value="1"/>
</dbReference>
<dbReference type="Pfam" id="PF00113">
    <property type="entry name" value="Enolase_C"/>
    <property type="match status" value="1"/>
</dbReference>
<dbReference type="Pfam" id="PF03952">
    <property type="entry name" value="Enolase_N"/>
    <property type="match status" value="1"/>
</dbReference>
<dbReference type="PIRSF" id="PIRSF001400">
    <property type="entry name" value="Enolase"/>
    <property type="match status" value="1"/>
</dbReference>
<dbReference type="PRINTS" id="PR00148">
    <property type="entry name" value="ENOLASE"/>
</dbReference>
<dbReference type="SFLD" id="SFLDS00001">
    <property type="entry name" value="Enolase"/>
    <property type="match status" value="1"/>
</dbReference>
<dbReference type="SFLD" id="SFLDF00002">
    <property type="entry name" value="enolase"/>
    <property type="match status" value="1"/>
</dbReference>
<dbReference type="SMART" id="SM01192">
    <property type="entry name" value="Enolase_C"/>
    <property type="match status" value="1"/>
</dbReference>
<dbReference type="SMART" id="SM01193">
    <property type="entry name" value="Enolase_N"/>
    <property type="match status" value="1"/>
</dbReference>
<dbReference type="SUPFAM" id="SSF51604">
    <property type="entry name" value="Enolase C-terminal domain-like"/>
    <property type="match status" value="1"/>
</dbReference>
<dbReference type="SUPFAM" id="SSF54826">
    <property type="entry name" value="Enolase N-terminal domain-like"/>
    <property type="match status" value="1"/>
</dbReference>
<dbReference type="PROSITE" id="PS00164">
    <property type="entry name" value="ENOLASE"/>
    <property type="match status" value="1"/>
</dbReference>
<feature type="chain" id="PRO_0000267145" description="Enolase 2">
    <location>
        <begin position="1"/>
        <end position="426"/>
    </location>
</feature>
<feature type="active site" description="Proton donor" evidence="1">
    <location>
        <position position="205"/>
    </location>
</feature>
<feature type="active site" description="Proton acceptor" evidence="1">
    <location>
        <position position="337"/>
    </location>
</feature>
<feature type="binding site" evidence="1">
    <location>
        <position position="163"/>
    </location>
    <ligand>
        <name>(2R)-2-phosphoglycerate</name>
        <dbReference type="ChEBI" id="CHEBI:58289"/>
    </ligand>
</feature>
<feature type="binding site" evidence="1">
    <location>
        <position position="242"/>
    </location>
    <ligand>
        <name>Mg(2+)</name>
        <dbReference type="ChEBI" id="CHEBI:18420"/>
    </ligand>
</feature>
<feature type="binding site" evidence="1">
    <location>
        <position position="285"/>
    </location>
    <ligand>
        <name>Mg(2+)</name>
        <dbReference type="ChEBI" id="CHEBI:18420"/>
    </ligand>
</feature>
<feature type="binding site" evidence="1">
    <location>
        <position position="312"/>
    </location>
    <ligand>
        <name>Mg(2+)</name>
        <dbReference type="ChEBI" id="CHEBI:18420"/>
    </ligand>
</feature>
<feature type="binding site" evidence="1">
    <location>
        <position position="337"/>
    </location>
    <ligand>
        <name>(2R)-2-phosphoglycerate</name>
        <dbReference type="ChEBI" id="CHEBI:58289"/>
    </ligand>
</feature>
<feature type="binding site" evidence="1">
    <location>
        <position position="366"/>
    </location>
    <ligand>
        <name>(2R)-2-phosphoglycerate</name>
        <dbReference type="ChEBI" id="CHEBI:58289"/>
    </ligand>
</feature>
<feature type="binding site" evidence="1">
    <location>
        <position position="367"/>
    </location>
    <ligand>
        <name>(2R)-2-phosphoglycerate</name>
        <dbReference type="ChEBI" id="CHEBI:58289"/>
    </ligand>
</feature>
<feature type="binding site" evidence="1">
    <location>
        <position position="388"/>
    </location>
    <ligand>
        <name>(2R)-2-phosphoglycerate</name>
        <dbReference type="ChEBI" id="CHEBI:58289"/>
    </ligand>
</feature>
<organism>
    <name type="scientific">Methanospirillum hungatei JF-1 (strain ATCC 27890 / DSM 864 / NBRC 100397 / JF-1)</name>
    <dbReference type="NCBI Taxonomy" id="323259"/>
    <lineage>
        <taxon>Archaea</taxon>
        <taxon>Methanobacteriati</taxon>
        <taxon>Methanobacteriota</taxon>
        <taxon>Stenosarchaea group</taxon>
        <taxon>Methanomicrobia</taxon>
        <taxon>Methanomicrobiales</taxon>
        <taxon>Methanospirillaceae</taxon>
        <taxon>Methanospirillum</taxon>
    </lineage>
</organism>
<gene>
    <name evidence="1" type="primary">eno2</name>
    <name type="ordered locus">Mhun_1101</name>
</gene>
<name>ENO2_METHJ</name>